<comment type="function">
    <text evidence="1">Uptake of L-rhamnose across the cytoplasmic membrane with the concomitant transport of protons into the cell (symport system).</text>
</comment>
<comment type="catalytic activity">
    <reaction evidence="1">
        <text>L-rhamnopyranose(in) + H(+)(in) = L-rhamnopyranose(out) + H(+)(out)</text>
        <dbReference type="Rhea" id="RHEA:29947"/>
        <dbReference type="ChEBI" id="CHEBI:15378"/>
        <dbReference type="ChEBI" id="CHEBI:62346"/>
    </reaction>
    <physiologicalReaction direction="right-to-left" evidence="1">
        <dbReference type="Rhea" id="RHEA:29949"/>
    </physiologicalReaction>
</comment>
<comment type="subcellular location">
    <subcellularLocation>
        <location evidence="1">Cell inner membrane</location>
        <topology evidence="1">Multi-pass membrane protein</topology>
    </subcellularLocation>
</comment>
<comment type="similarity">
    <text evidence="1">Belongs to the L-rhamnose transporter (TC 2.A.7.6) family.</text>
</comment>
<gene>
    <name evidence="1" type="primary">rhaT</name>
    <name type="ordered locus">ECA0450</name>
</gene>
<organism>
    <name type="scientific">Pectobacterium atrosepticum (strain SCRI 1043 / ATCC BAA-672)</name>
    <name type="common">Erwinia carotovora subsp. atroseptica</name>
    <dbReference type="NCBI Taxonomy" id="218491"/>
    <lineage>
        <taxon>Bacteria</taxon>
        <taxon>Pseudomonadati</taxon>
        <taxon>Pseudomonadota</taxon>
        <taxon>Gammaproteobacteria</taxon>
        <taxon>Enterobacterales</taxon>
        <taxon>Pectobacteriaceae</taxon>
        <taxon>Pectobacterium</taxon>
    </lineage>
</organism>
<name>RHAT_PECAS</name>
<keyword id="KW-0997">Cell inner membrane</keyword>
<keyword id="KW-1003">Cell membrane</keyword>
<keyword id="KW-0472">Membrane</keyword>
<keyword id="KW-1185">Reference proteome</keyword>
<keyword id="KW-0762">Sugar transport</keyword>
<keyword id="KW-0769">Symport</keyword>
<keyword id="KW-0812">Transmembrane</keyword>
<keyword id="KW-1133">Transmembrane helix</keyword>
<keyword id="KW-0813">Transport</keyword>
<dbReference type="EMBL" id="BX950851">
    <property type="protein sequence ID" value="CAG73365.1"/>
    <property type="molecule type" value="Genomic_DNA"/>
</dbReference>
<dbReference type="RefSeq" id="WP_011092072.1">
    <property type="nucleotide sequence ID" value="NC_004547.2"/>
</dbReference>
<dbReference type="STRING" id="218491.ECA0450"/>
<dbReference type="KEGG" id="eca:ECA0450"/>
<dbReference type="PATRIC" id="fig|218491.5.peg.454"/>
<dbReference type="eggNOG" id="ENOG502Z7ID">
    <property type="taxonomic scope" value="Bacteria"/>
</dbReference>
<dbReference type="HOGENOM" id="CLU_066437_0_0_6"/>
<dbReference type="OrthoDB" id="9790043at2"/>
<dbReference type="Proteomes" id="UP000007966">
    <property type="component" value="Chromosome"/>
</dbReference>
<dbReference type="GO" id="GO:0005886">
    <property type="term" value="C:plasma membrane"/>
    <property type="evidence" value="ECO:0007669"/>
    <property type="project" value="UniProtKB-SubCell"/>
</dbReference>
<dbReference type="GO" id="GO:0015153">
    <property type="term" value="F:rhamnose transmembrane transporter activity"/>
    <property type="evidence" value="ECO:0007669"/>
    <property type="project" value="UniProtKB-UniRule"/>
</dbReference>
<dbReference type="GO" id="GO:0015293">
    <property type="term" value="F:symporter activity"/>
    <property type="evidence" value="ECO:0007669"/>
    <property type="project" value="UniProtKB-KW"/>
</dbReference>
<dbReference type="HAMAP" id="MF_01532">
    <property type="entry name" value="RhaT"/>
    <property type="match status" value="1"/>
</dbReference>
<dbReference type="InterPro" id="IPR004673">
    <property type="entry name" value="L-rhamnose-proton_sym_RhaT"/>
</dbReference>
<dbReference type="NCBIfam" id="NF010021">
    <property type="entry name" value="PRK13499.1-1"/>
    <property type="match status" value="1"/>
</dbReference>
<dbReference type="NCBIfam" id="NF010023">
    <property type="entry name" value="PRK13499.1-3"/>
    <property type="match status" value="1"/>
</dbReference>
<dbReference type="Pfam" id="PF06379">
    <property type="entry name" value="RhaT"/>
    <property type="match status" value="1"/>
</dbReference>
<sequence>MSNPILLGIFWHFIGAASAACFYAPFKQVKNWSWETMWSLGGFFSWIILPWSISWWLLPDFWRYYGSFDMATLLPIFLFGAMWGIGNINYGLTMRYLGMSMGIGIAIGVTLIIGTLMTPVLQGKFSVLFGSPGGQMTLLGVLVAVIGVAIVSYAGLLKERALGIRAEEFSLKKGLILAVMCGIFSAGMSFAMDAAKPMHTAAQALGINSLYVALPSYVVIMGGGAIVNLGFCFIRLATCKGISLKADLAQAKPLLIANALFAILGGVMWYLQFFFYAWGHANIPADYTYISWMLHMSFYVLCGGIVGLLFKEWKAVGQKPVRMLVLGCVVIILAANIVGLGMAV</sequence>
<proteinExistence type="inferred from homology"/>
<reference key="1">
    <citation type="journal article" date="2004" name="Proc. Natl. Acad. Sci. U.S.A.">
        <title>Genome sequence of the enterobacterial phytopathogen Erwinia carotovora subsp. atroseptica and characterization of virulence factors.</title>
        <authorList>
            <person name="Bell K.S."/>
            <person name="Sebaihia M."/>
            <person name="Pritchard L."/>
            <person name="Holden M.T.G."/>
            <person name="Hyman L.J."/>
            <person name="Holeva M.C."/>
            <person name="Thomson N.R."/>
            <person name="Bentley S.D."/>
            <person name="Churcher L.J.C."/>
            <person name="Mungall K."/>
            <person name="Atkin R."/>
            <person name="Bason N."/>
            <person name="Brooks K."/>
            <person name="Chillingworth T."/>
            <person name="Clark K."/>
            <person name="Doggett J."/>
            <person name="Fraser A."/>
            <person name="Hance Z."/>
            <person name="Hauser H."/>
            <person name="Jagels K."/>
            <person name="Moule S."/>
            <person name="Norbertczak H."/>
            <person name="Ormond D."/>
            <person name="Price C."/>
            <person name="Quail M.A."/>
            <person name="Sanders M."/>
            <person name="Walker D."/>
            <person name="Whitehead S."/>
            <person name="Salmond G.P.C."/>
            <person name="Birch P.R.J."/>
            <person name="Parkhill J."/>
            <person name="Toth I.K."/>
        </authorList>
    </citation>
    <scope>NUCLEOTIDE SEQUENCE [LARGE SCALE GENOMIC DNA]</scope>
    <source>
        <strain>SCRI 1043 / ATCC BAA-672</strain>
    </source>
</reference>
<protein>
    <recommendedName>
        <fullName evidence="1">L-rhamnose-proton symporter</fullName>
    </recommendedName>
    <alternativeName>
        <fullName evidence="1">L-rhamnose-H(+) transport protein</fullName>
    </alternativeName>
</protein>
<accession>Q6DA13</accession>
<feature type="chain" id="PRO_0000208275" description="L-rhamnose-proton symporter">
    <location>
        <begin position="1"/>
        <end position="344"/>
    </location>
</feature>
<feature type="transmembrane region" description="Helical" evidence="1">
    <location>
        <begin position="4"/>
        <end position="24"/>
    </location>
</feature>
<feature type="transmembrane region" description="Helical" evidence="1">
    <location>
        <begin position="38"/>
        <end position="58"/>
    </location>
</feature>
<feature type="transmembrane region" description="Helical" evidence="1">
    <location>
        <begin position="68"/>
        <end position="88"/>
    </location>
</feature>
<feature type="transmembrane region" description="Helical" evidence="1">
    <location>
        <begin position="101"/>
        <end position="121"/>
    </location>
</feature>
<feature type="transmembrane region" description="Helical" evidence="1">
    <location>
        <begin position="137"/>
        <end position="157"/>
    </location>
</feature>
<feature type="transmembrane region" description="Helical" evidence="1">
    <location>
        <begin position="175"/>
        <end position="195"/>
    </location>
</feature>
<feature type="transmembrane region" description="Helical" evidence="1">
    <location>
        <begin position="214"/>
        <end position="234"/>
    </location>
</feature>
<feature type="transmembrane region" description="Helical" evidence="1">
    <location>
        <begin position="255"/>
        <end position="275"/>
    </location>
</feature>
<feature type="transmembrane region" description="Helical" evidence="1">
    <location>
        <begin position="290"/>
        <end position="310"/>
    </location>
</feature>
<feature type="transmembrane region" description="Helical" evidence="1">
    <location>
        <begin position="324"/>
        <end position="344"/>
    </location>
</feature>
<evidence type="ECO:0000255" key="1">
    <source>
        <dbReference type="HAMAP-Rule" id="MF_01532"/>
    </source>
</evidence>